<accession>Q74U12</accession>
<evidence type="ECO:0000255" key="1">
    <source>
        <dbReference type="HAMAP-Rule" id="MF_01599"/>
    </source>
</evidence>
<evidence type="ECO:0000305" key="2"/>
<proteinExistence type="inferred from homology"/>
<feature type="chain" id="PRO_0000333153" description="Na(+)/H(+) antiporter NhaB">
    <location>
        <begin position="1"/>
        <end position="524"/>
    </location>
</feature>
<feature type="transmembrane region" description="Helical" evidence="1">
    <location>
        <begin position="13"/>
        <end position="33"/>
    </location>
</feature>
<feature type="transmembrane region" description="Helical" evidence="1">
    <location>
        <begin position="98"/>
        <end position="118"/>
    </location>
</feature>
<feature type="transmembrane region" description="Helical" evidence="1">
    <location>
        <begin position="140"/>
        <end position="160"/>
    </location>
</feature>
<feature type="transmembrane region" description="Helical" evidence="1">
    <location>
        <begin position="239"/>
        <end position="259"/>
    </location>
</feature>
<feature type="transmembrane region" description="Helical" evidence="1">
    <location>
        <begin position="304"/>
        <end position="324"/>
    </location>
</feature>
<feature type="transmembrane region" description="Helical" evidence="1">
    <location>
        <begin position="325"/>
        <end position="345"/>
    </location>
</feature>
<feature type="transmembrane region" description="Helical" evidence="1">
    <location>
        <begin position="358"/>
        <end position="378"/>
    </location>
</feature>
<feature type="transmembrane region" description="Helical" evidence="1">
    <location>
        <begin position="448"/>
        <end position="468"/>
    </location>
</feature>
<feature type="transmembrane region" description="Helical" evidence="1">
    <location>
        <begin position="479"/>
        <end position="499"/>
    </location>
</feature>
<reference key="1">
    <citation type="journal article" date="2001" name="Nature">
        <title>Genome sequence of Yersinia pestis, the causative agent of plague.</title>
        <authorList>
            <person name="Parkhill J."/>
            <person name="Wren B.W."/>
            <person name="Thomson N.R."/>
            <person name="Titball R.W."/>
            <person name="Holden M.T.G."/>
            <person name="Prentice M.B."/>
            <person name="Sebaihia M."/>
            <person name="James K.D."/>
            <person name="Churcher C.M."/>
            <person name="Mungall K.L."/>
            <person name="Baker S."/>
            <person name="Basham D."/>
            <person name="Bentley S.D."/>
            <person name="Brooks K."/>
            <person name="Cerdeno-Tarraga A.-M."/>
            <person name="Chillingworth T."/>
            <person name="Cronin A."/>
            <person name="Davies R.M."/>
            <person name="Davis P."/>
            <person name="Dougan G."/>
            <person name="Feltwell T."/>
            <person name="Hamlin N."/>
            <person name="Holroyd S."/>
            <person name="Jagels K."/>
            <person name="Karlyshev A.V."/>
            <person name="Leather S."/>
            <person name="Moule S."/>
            <person name="Oyston P.C.F."/>
            <person name="Quail M.A."/>
            <person name="Rutherford K.M."/>
            <person name="Simmonds M."/>
            <person name="Skelton J."/>
            <person name="Stevens K."/>
            <person name="Whitehead S."/>
            <person name="Barrell B.G."/>
        </authorList>
    </citation>
    <scope>NUCLEOTIDE SEQUENCE [LARGE SCALE GENOMIC DNA]</scope>
    <source>
        <strain>CO-92 / Biovar Orientalis</strain>
    </source>
</reference>
<reference key="2">
    <citation type="journal article" date="2002" name="J. Bacteriol.">
        <title>Genome sequence of Yersinia pestis KIM.</title>
        <authorList>
            <person name="Deng W."/>
            <person name="Burland V."/>
            <person name="Plunkett G. III"/>
            <person name="Boutin A."/>
            <person name="Mayhew G.F."/>
            <person name="Liss P."/>
            <person name="Perna N.T."/>
            <person name="Rose D.J."/>
            <person name="Mau B."/>
            <person name="Zhou S."/>
            <person name="Schwartz D.C."/>
            <person name="Fetherston J.D."/>
            <person name="Lindler L.E."/>
            <person name="Brubaker R.R."/>
            <person name="Plano G.V."/>
            <person name="Straley S.C."/>
            <person name="McDonough K.A."/>
            <person name="Nilles M.L."/>
            <person name="Matson J.S."/>
            <person name="Blattner F.R."/>
            <person name="Perry R.D."/>
        </authorList>
    </citation>
    <scope>NUCLEOTIDE SEQUENCE [LARGE SCALE GENOMIC DNA]</scope>
    <source>
        <strain>KIM10+ / Biovar Mediaevalis</strain>
    </source>
</reference>
<reference key="3">
    <citation type="journal article" date="2004" name="DNA Res.">
        <title>Complete genome sequence of Yersinia pestis strain 91001, an isolate avirulent to humans.</title>
        <authorList>
            <person name="Song Y."/>
            <person name="Tong Z."/>
            <person name="Wang J."/>
            <person name="Wang L."/>
            <person name="Guo Z."/>
            <person name="Han Y."/>
            <person name="Zhang J."/>
            <person name="Pei D."/>
            <person name="Zhou D."/>
            <person name="Qin H."/>
            <person name="Pang X."/>
            <person name="Han Y."/>
            <person name="Zhai J."/>
            <person name="Li M."/>
            <person name="Cui B."/>
            <person name="Qi Z."/>
            <person name="Jin L."/>
            <person name="Dai R."/>
            <person name="Chen F."/>
            <person name="Li S."/>
            <person name="Ye C."/>
            <person name="Du Z."/>
            <person name="Lin W."/>
            <person name="Wang J."/>
            <person name="Yu J."/>
            <person name="Yang H."/>
            <person name="Wang J."/>
            <person name="Huang P."/>
            <person name="Yang R."/>
        </authorList>
    </citation>
    <scope>NUCLEOTIDE SEQUENCE [LARGE SCALE GENOMIC DNA]</scope>
    <source>
        <strain>91001 / Biovar Mediaevalis</strain>
    </source>
</reference>
<dbReference type="EMBL" id="AL590842">
    <property type="protein sequence ID" value="CAL20776.1"/>
    <property type="molecule type" value="Genomic_DNA"/>
</dbReference>
<dbReference type="EMBL" id="AE009952">
    <property type="status" value="NOT_ANNOTATED_CDS"/>
    <property type="molecule type" value="Genomic_DNA"/>
</dbReference>
<dbReference type="EMBL" id="AE017042">
    <property type="protein sequence ID" value="AAS62162.1"/>
    <property type="molecule type" value="Genomic_DNA"/>
</dbReference>
<dbReference type="PIR" id="AE0261">
    <property type="entry name" value="AE0261"/>
</dbReference>
<dbReference type="RefSeq" id="WP_002211689.1">
    <property type="nucleotide sequence ID" value="NZ_WHLN01000055.1"/>
</dbReference>
<dbReference type="RefSeq" id="YP_002347120.1">
    <property type="nucleotide sequence ID" value="NC_003143.1"/>
</dbReference>
<dbReference type="SMR" id="Q74U12"/>
<dbReference type="STRING" id="214092.YPO2142"/>
<dbReference type="PaxDb" id="214092-YPO2142"/>
<dbReference type="EnsemblBacteria" id="AAS62162">
    <property type="protein sequence ID" value="AAS62162"/>
    <property type="gene ID" value="YP_1945"/>
</dbReference>
<dbReference type="GeneID" id="57976523"/>
<dbReference type="KEGG" id="ype:YPO2142"/>
<dbReference type="KEGG" id="ypm:YP_1945"/>
<dbReference type="PATRIC" id="fig|214092.21.peg.2530"/>
<dbReference type="eggNOG" id="COG3067">
    <property type="taxonomic scope" value="Bacteria"/>
</dbReference>
<dbReference type="HOGENOM" id="CLU_041110_0_0_6"/>
<dbReference type="OMA" id="FFIRMAP"/>
<dbReference type="OrthoDB" id="5288732at2"/>
<dbReference type="Proteomes" id="UP000000815">
    <property type="component" value="Chromosome"/>
</dbReference>
<dbReference type="Proteomes" id="UP000001019">
    <property type="component" value="Chromosome"/>
</dbReference>
<dbReference type="Proteomes" id="UP000002490">
    <property type="component" value="Chromosome"/>
</dbReference>
<dbReference type="GO" id="GO:0005886">
    <property type="term" value="C:plasma membrane"/>
    <property type="evidence" value="ECO:0000318"/>
    <property type="project" value="GO_Central"/>
</dbReference>
<dbReference type="GO" id="GO:0015385">
    <property type="term" value="F:sodium:proton antiporter activity"/>
    <property type="evidence" value="ECO:0000318"/>
    <property type="project" value="GO_Central"/>
</dbReference>
<dbReference type="HAMAP" id="MF_01599">
    <property type="entry name" value="NhaB"/>
    <property type="match status" value="1"/>
</dbReference>
<dbReference type="InterPro" id="IPR004671">
    <property type="entry name" value="Na+/H+_antiporter_NhaB"/>
</dbReference>
<dbReference type="NCBIfam" id="TIGR00774">
    <property type="entry name" value="NhaB"/>
    <property type="match status" value="1"/>
</dbReference>
<dbReference type="NCBIfam" id="NF007093">
    <property type="entry name" value="PRK09547.1"/>
    <property type="match status" value="1"/>
</dbReference>
<dbReference type="PANTHER" id="PTHR43302:SF1">
    <property type="entry name" value="NA(+)_H(+) ANTIPORTER NHAB"/>
    <property type="match status" value="1"/>
</dbReference>
<dbReference type="PANTHER" id="PTHR43302">
    <property type="entry name" value="TRANSPORTER ARSB-RELATED"/>
    <property type="match status" value="1"/>
</dbReference>
<dbReference type="Pfam" id="PF06450">
    <property type="entry name" value="NhaB"/>
    <property type="match status" value="1"/>
</dbReference>
<gene>
    <name evidence="1" type="primary">nhaB</name>
    <name type="ordered locus">YPO2142</name>
    <name type="ordered locus">y2178</name>
    <name type="ordered locus">YP_1945</name>
</gene>
<name>NHAB_YERPE</name>
<sequence length="524" mass="57476">MDITNRQAVLKNFLGNSPDWYKLAIMGFLIINPLVFFFVSPFVAGWMLVIEFIFTLAMALKCYPLQPGGLLAIQAVAIGMTSPHQVAEEIANNLEVLLLLVFMVAGIYFMKQLLLFVFTKLLLNIRSKTILSLAFCLASAFLSAFLDALTVIAVVISVSVGFYTIYHNVTSNHSDKDITDDSGIDNQDSHETLEQFRAFLRSLMMHAGVGTALGGVMTMVGEPQNLIIAKSAGWNFADFFIRMLPVTLPVFIFGLLVCLLVEKFKLFGYGAQLPERVRQVLTEYDQQANAKRTKQEKMKLIVQAIIGVWLVLALALHLAEVGLVGLSVIILATSFCGITNEHSLGKAFQEALPFTALLTVFFAVVAVIIEQSLFTPIIQFVLQASPSAQLSLFYLFNGLLSSVSDNVFVGTVYINEARSAFEHGIVSLQQFELLAVAINTGTNLPSVATPNGQAAFLFLLTSALAPLIRLSYGRMVYMALPYTLVMTIVGLLGVEFLLVPMTEWLTQAGWISLPHITNGVAIPH</sequence>
<comment type="function">
    <text evidence="1">Na(+)/H(+) antiporter that extrudes sodium in exchange for external protons.</text>
</comment>
<comment type="catalytic activity">
    <reaction evidence="1">
        <text>2 Na(+)(in) + 3 H(+)(out) = 2 Na(+)(out) + 3 H(+)(in)</text>
        <dbReference type="Rhea" id="RHEA:29247"/>
        <dbReference type="ChEBI" id="CHEBI:15378"/>
        <dbReference type="ChEBI" id="CHEBI:29101"/>
    </reaction>
    <physiologicalReaction direction="left-to-right" evidence="1">
        <dbReference type="Rhea" id="RHEA:29248"/>
    </physiologicalReaction>
</comment>
<comment type="subcellular location">
    <subcellularLocation>
        <location evidence="1">Cell inner membrane</location>
        <topology evidence="1">Multi-pass membrane protein</topology>
    </subcellularLocation>
</comment>
<comment type="similarity">
    <text evidence="1">Belongs to the NhaB Na(+)/H(+) (TC 2.A.34) antiporter family.</text>
</comment>
<comment type="sequence caution" evidence="2">
    <conflict type="erroneous termination">
        <sequence resource="EMBL" id="AE009952"/>
    </conflict>
    <text>Truncated C-terminus.</text>
</comment>
<keyword id="KW-0050">Antiport</keyword>
<keyword id="KW-0997">Cell inner membrane</keyword>
<keyword id="KW-1003">Cell membrane</keyword>
<keyword id="KW-0406">Ion transport</keyword>
<keyword id="KW-0472">Membrane</keyword>
<keyword id="KW-1185">Reference proteome</keyword>
<keyword id="KW-0915">Sodium</keyword>
<keyword id="KW-0739">Sodium transport</keyword>
<keyword id="KW-0812">Transmembrane</keyword>
<keyword id="KW-1133">Transmembrane helix</keyword>
<keyword id="KW-0813">Transport</keyword>
<organism>
    <name type="scientific">Yersinia pestis</name>
    <dbReference type="NCBI Taxonomy" id="632"/>
    <lineage>
        <taxon>Bacteria</taxon>
        <taxon>Pseudomonadati</taxon>
        <taxon>Pseudomonadota</taxon>
        <taxon>Gammaproteobacteria</taxon>
        <taxon>Enterobacterales</taxon>
        <taxon>Yersiniaceae</taxon>
        <taxon>Yersinia</taxon>
    </lineage>
</organism>
<protein>
    <recommendedName>
        <fullName evidence="1">Na(+)/H(+) antiporter NhaB</fullName>
    </recommendedName>
    <alternativeName>
        <fullName evidence="1">Sodium/proton antiporter NhaB</fullName>
    </alternativeName>
</protein>